<gene>
    <name type="primary">HIT1</name>
    <name type="ordered locus">YJR055W</name>
    <name type="ORF">J1705</name>
</gene>
<name>HIT1_YEAST</name>
<comment type="interaction">
    <interactant intactId="EBI-8359">
        <id>P46973</id>
    </interactant>
    <interactant intactId="EBI-16186">
        <id>Q08932</id>
        <label>RSA1</label>
    </interactant>
    <organismsDiffer>false</organismsDiffer>
    <experiments>9</experiments>
</comment>
<comment type="miscellaneous">
    <text evidence="2">Present with 2730 molecules/cell in log phase SD medium.</text>
</comment>
<dbReference type="EMBL" id="D11103">
    <property type="protein sequence ID" value="BAA01878.1"/>
    <property type="molecule type" value="Genomic_DNA"/>
</dbReference>
<dbReference type="EMBL" id="Z49555">
    <property type="protein sequence ID" value="CAA89583.1"/>
    <property type="molecule type" value="Genomic_DNA"/>
</dbReference>
<dbReference type="EMBL" id="L47993">
    <property type="protein sequence ID" value="AAB39281.1"/>
    <property type="molecule type" value="Genomic_DNA"/>
</dbReference>
<dbReference type="EMBL" id="AY558097">
    <property type="protein sequence ID" value="AAS56423.1"/>
    <property type="molecule type" value="Genomic_DNA"/>
</dbReference>
<dbReference type="EMBL" id="BK006943">
    <property type="protein sequence ID" value="DAA08842.1"/>
    <property type="molecule type" value="Genomic_DNA"/>
</dbReference>
<dbReference type="PIR" id="S57074">
    <property type="entry name" value="S57074"/>
</dbReference>
<dbReference type="RefSeq" id="NP_012589.1">
    <property type="nucleotide sequence ID" value="NM_001181713.1"/>
</dbReference>
<dbReference type="PDB" id="2MJF">
    <property type="method" value="NMR"/>
    <property type="chains" value="B=70-164"/>
</dbReference>
<dbReference type="PDB" id="2N95">
    <property type="method" value="NMR"/>
    <property type="chains" value="A=1-46"/>
</dbReference>
<dbReference type="PDBsum" id="2MJF"/>
<dbReference type="PDBsum" id="2N95"/>
<dbReference type="BMRB" id="P46973"/>
<dbReference type="SMR" id="P46973"/>
<dbReference type="BioGRID" id="33810">
    <property type="interactions" value="72"/>
</dbReference>
<dbReference type="DIP" id="DIP-4241N"/>
<dbReference type="FunCoup" id="P46973">
    <property type="interactions" value="133"/>
</dbReference>
<dbReference type="IntAct" id="P46973">
    <property type="interactions" value="5"/>
</dbReference>
<dbReference type="STRING" id="4932.YJR055W"/>
<dbReference type="PaxDb" id="4932-YJR055W"/>
<dbReference type="PeptideAtlas" id="P46973"/>
<dbReference type="EnsemblFungi" id="YJR055W_mRNA">
    <property type="protein sequence ID" value="YJR055W"/>
    <property type="gene ID" value="YJR055W"/>
</dbReference>
<dbReference type="GeneID" id="853516"/>
<dbReference type="KEGG" id="sce:YJR055W"/>
<dbReference type="AGR" id="SGD:S000003816"/>
<dbReference type="SGD" id="S000003816">
    <property type="gene designation" value="HIT1"/>
</dbReference>
<dbReference type="VEuPathDB" id="FungiDB:YJR055W"/>
<dbReference type="eggNOG" id="ENOG502S27I">
    <property type="taxonomic scope" value="Eukaryota"/>
</dbReference>
<dbReference type="HOGENOM" id="CLU_1619339_0_0_1"/>
<dbReference type="InParanoid" id="P46973"/>
<dbReference type="OMA" id="QYNTVKF"/>
<dbReference type="OrthoDB" id="18412at2759"/>
<dbReference type="BioCyc" id="YEAST:G3O-31689-MONOMER"/>
<dbReference type="BioGRID-ORCS" id="853516">
    <property type="hits" value="7 hits in 10 CRISPR screens"/>
</dbReference>
<dbReference type="EvolutionaryTrace" id="P46973"/>
<dbReference type="PRO" id="PR:P46973"/>
<dbReference type="Proteomes" id="UP000002311">
    <property type="component" value="Chromosome X"/>
</dbReference>
<dbReference type="RNAct" id="P46973">
    <property type="molecule type" value="protein"/>
</dbReference>
<dbReference type="GO" id="GO:0005737">
    <property type="term" value="C:cytoplasm"/>
    <property type="evidence" value="ECO:0007005"/>
    <property type="project" value="SGD"/>
</dbReference>
<dbReference type="GO" id="GO:0005634">
    <property type="term" value="C:nucleus"/>
    <property type="evidence" value="ECO:0007005"/>
    <property type="project" value="SGD"/>
</dbReference>
<dbReference type="GO" id="GO:0070761">
    <property type="term" value="C:pre-snoRNP complex"/>
    <property type="evidence" value="ECO:0000318"/>
    <property type="project" value="GO_Central"/>
</dbReference>
<dbReference type="GO" id="GO:0008270">
    <property type="term" value="F:zinc ion binding"/>
    <property type="evidence" value="ECO:0007669"/>
    <property type="project" value="UniProtKB-KW"/>
</dbReference>
<dbReference type="GO" id="GO:0000492">
    <property type="term" value="P:box C/D snoRNP assembly"/>
    <property type="evidence" value="ECO:0000315"/>
    <property type="project" value="SGD"/>
</dbReference>
<dbReference type="GO" id="GO:0000463">
    <property type="term" value="P:maturation of LSU-rRNA from tricistronic rRNA transcript (SSU-rRNA, 5.8S rRNA, LSU-rRNA)"/>
    <property type="evidence" value="ECO:0000315"/>
    <property type="project" value="SGD"/>
</dbReference>
<dbReference type="GO" id="GO:0048254">
    <property type="term" value="P:snoRNA localization"/>
    <property type="evidence" value="ECO:0000318"/>
    <property type="project" value="GO_Central"/>
</dbReference>
<dbReference type="CDD" id="cd23024">
    <property type="entry name" value="zf-HIT_ZNHIT2-3"/>
    <property type="match status" value="1"/>
</dbReference>
<dbReference type="FunFam" id="3.30.60.190:FF:000006">
    <property type="entry name" value="Hit1p"/>
    <property type="match status" value="1"/>
</dbReference>
<dbReference type="FunFam" id="1.20.1440.260:FF:000001">
    <property type="entry name" value="Protein HIT1"/>
    <property type="match status" value="1"/>
</dbReference>
<dbReference type="Gene3D" id="1.20.1440.260">
    <property type="match status" value="1"/>
</dbReference>
<dbReference type="Gene3D" id="3.30.60.190">
    <property type="match status" value="1"/>
</dbReference>
<dbReference type="InterPro" id="IPR040722">
    <property type="entry name" value="Hit1_C"/>
</dbReference>
<dbReference type="InterPro" id="IPR007529">
    <property type="entry name" value="Znf_HIT"/>
</dbReference>
<dbReference type="Pfam" id="PF18268">
    <property type="entry name" value="Hit1_C"/>
    <property type="match status" value="1"/>
</dbReference>
<dbReference type="Pfam" id="PF04438">
    <property type="entry name" value="zf-HIT"/>
    <property type="match status" value="1"/>
</dbReference>
<dbReference type="SUPFAM" id="SSF144232">
    <property type="entry name" value="HIT/MYND zinc finger-like"/>
    <property type="match status" value="1"/>
</dbReference>
<dbReference type="PROSITE" id="PS51083">
    <property type="entry name" value="ZF_HIT"/>
    <property type="match status" value="1"/>
</dbReference>
<keyword id="KW-0002">3D-structure</keyword>
<keyword id="KW-0479">Metal-binding</keyword>
<keyword id="KW-1185">Reference proteome</keyword>
<keyword id="KW-0862">Zinc</keyword>
<keyword id="KW-0863">Zinc-finger</keyword>
<proteinExistence type="evidence at protein level"/>
<evidence type="ECO:0000255" key="1">
    <source>
        <dbReference type="PROSITE-ProRule" id="PRU00453"/>
    </source>
</evidence>
<evidence type="ECO:0000269" key="2">
    <source>
    </source>
</evidence>
<evidence type="ECO:0000305" key="3"/>
<evidence type="ECO:0007829" key="4">
    <source>
        <dbReference type="PDB" id="2MJF"/>
    </source>
</evidence>
<evidence type="ECO:0007829" key="5">
    <source>
        <dbReference type="PDB" id="2N95"/>
    </source>
</evidence>
<protein>
    <recommendedName>
        <fullName>Protein HIT1</fullName>
    </recommendedName>
</protein>
<reference key="1">
    <citation type="journal article" date="1992" name="Genetics">
        <title>Ty element-induced temperature-sensitive mutations of Saccharomyces cerevisiae.</title>
        <authorList>
            <person name="Kawakami K."/>
            <person name="Shafer B.K."/>
            <person name="Garfinkel D.J."/>
            <person name="Strathern J.N."/>
            <person name="Nakamura Y."/>
        </authorList>
    </citation>
    <scope>NUCLEOTIDE SEQUENCE [GENOMIC DNA]</scope>
</reference>
<reference key="2">
    <citation type="journal article" date="1996" name="Yeast">
        <title>Analysis of a 62 kb DNA sequence of chromosome X reveals 36 open reading frames and a gene cluster with a counterpart on chromosome XI.</title>
        <authorList>
            <person name="Huang M.-E."/>
            <person name="Manus V."/>
            <person name="Chuat J.-C."/>
            <person name="Galibert F."/>
        </authorList>
    </citation>
    <scope>NUCLEOTIDE SEQUENCE [GENOMIC DNA]</scope>
    <source>
        <strain>ATCC 204508 / S288c</strain>
    </source>
</reference>
<reference key="3">
    <citation type="journal article" date="1996" name="EMBO J.">
        <title>Complete nucleotide sequence of Saccharomyces cerevisiae chromosome X.</title>
        <authorList>
            <person name="Galibert F."/>
            <person name="Alexandraki D."/>
            <person name="Baur A."/>
            <person name="Boles E."/>
            <person name="Chalwatzis N."/>
            <person name="Chuat J.-C."/>
            <person name="Coster F."/>
            <person name="Cziepluch C."/>
            <person name="de Haan M."/>
            <person name="Domdey H."/>
            <person name="Durand P."/>
            <person name="Entian K.-D."/>
            <person name="Gatius M."/>
            <person name="Goffeau A."/>
            <person name="Grivell L.A."/>
            <person name="Hennemann A."/>
            <person name="Herbert C.J."/>
            <person name="Heumann K."/>
            <person name="Hilger F."/>
            <person name="Hollenberg C.P."/>
            <person name="Huang M.-E."/>
            <person name="Jacq C."/>
            <person name="Jauniaux J.-C."/>
            <person name="Katsoulou C."/>
            <person name="Kirchrath L."/>
            <person name="Kleine K."/>
            <person name="Kordes E."/>
            <person name="Koetter P."/>
            <person name="Liebl S."/>
            <person name="Louis E.J."/>
            <person name="Manus V."/>
            <person name="Mewes H.-W."/>
            <person name="Miosga T."/>
            <person name="Obermaier B."/>
            <person name="Perea J."/>
            <person name="Pohl T.M."/>
            <person name="Portetelle D."/>
            <person name="Pujol A."/>
            <person name="Purnelle B."/>
            <person name="Ramezani Rad M."/>
            <person name="Rasmussen S.W."/>
            <person name="Rose M."/>
            <person name="Rossau R."/>
            <person name="Schaaff-Gerstenschlaeger I."/>
            <person name="Smits P.H.M."/>
            <person name="Scarcez T."/>
            <person name="Soriano N."/>
            <person name="To Van D."/>
            <person name="Tzermia M."/>
            <person name="Van Broekhoven A."/>
            <person name="Vandenbol M."/>
            <person name="Wedler H."/>
            <person name="von Wettstein D."/>
            <person name="Wambutt R."/>
            <person name="Zagulski M."/>
            <person name="Zollner A."/>
            <person name="Karpfinger-Hartl L."/>
        </authorList>
    </citation>
    <scope>NUCLEOTIDE SEQUENCE [LARGE SCALE GENOMIC DNA]</scope>
    <source>
        <strain>ATCC 204508 / S288c</strain>
    </source>
</reference>
<reference key="4">
    <citation type="journal article" date="2014" name="G3 (Bethesda)">
        <title>The reference genome sequence of Saccharomyces cerevisiae: Then and now.</title>
        <authorList>
            <person name="Engel S.R."/>
            <person name="Dietrich F.S."/>
            <person name="Fisk D.G."/>
            <person name="Binkley G."/>
            <person name="Balakrishnan R."/>
            <person name="Costanzo M.C."/>
            <person name="Dwight S.S."/>
            <person name="Hitz B.C."/>
            <person name="Karra K."/>
            <person name="Nash R.S."/>
            <person name="Weng S."/>
            <person name="Wong E.D."/>
            <person name="Lloyd P."/>
            <person name="Skrzypek M.S."/>
            <person name="Miyasato S.R."/>
            <person name="Simison M."/>
            <person name="Cherry J.M."/>
        </authorList>
    </citation>
    <scope>GENOME REANNOTATION</scope>
    <source>
        <strain>ATCC 204508 / S288c</strain>
    </source>
</reference>
<reference key="5">
    <citation type="journal article" date="2007" name="Genome Res.">
        <title>Approaching a complete repository of sequence-verified protein-encoding clones for Saccharomyces cerevisiae.</title>
        <authorList>
            <person name="Hu Y."/>
            <person name="Rolfs A."/>
            <person name="Bhullar B."/>
            <person name="Murthy T.V.S."/>
            <person name="Zhu C."/>
            <person name="Berger M.F."/>
            <person name="Camargo A.A."/>
            <person name="Kelley F."/>
            <person name="McCarron S."/>
            <person name="Jepson D."/>
            <person name="Richardson A."/>
            <person name="Raphael J."/>
            <person name="Moreira D."/>
            <person name="Taycher E."/>
            <person name="Zuo D."/>
            <person name="Mohr S."/>
            <person name="Kane M.F."/>
            <person name="Williamson J."/>
            <person name="Simpson A.J.G."/>
            <person name="Bulyk M.L."/>
            <person name="Harlow E."/>
            <person name="Marsischky G."/>
            <person name="Kolodner R.D."/>
            <person name="LaBaer J."/>
        </authorList>
    </citation>
    <scope>NUCLEOTIDE SEQUENCE [GENOMIC DNA]</scope>
    <source>
        <strain>ATCC 204508 / S288c</strain>
    </source>
</reference>
<reference key="6">
    <citation type="journal article" date="2003" name="Nature">
        <title>Global analysis of protein expression in yeast.</title>
        <authorList>
            <person name="Ghaemmaghami S."/>
            <person name="Huh W.-K."/>
            <person name="Bower K."/>
            <person name="Howson R.W."/>
            <person name="Belle A."/>
            <person name="Dephoure N."/>
            <person name="O'Shea E.K."/>
            <person name="Weissman J.S."/>
        </authorList>
    </citation>
    <scope>LEVEL OF PROTEIN EXPRESSION [LARGE SCALE ANALYSIS]</scope>
</reference>
<feature type="chain" id="PRO_0000173556" description="Protein HIT1">
    <location>
        <begin position="1"/>
        <end position="164"/>
    </location>
</feature>
<feature type="zinc finger region" description="HIT-type; degenerate" evidence="1">
    <location>
        <begin position="8"/>
        <end position="49"/>
    </location>
</feature>
<feature type="binding site" evidence="1">
    <location>
        <position position="8"/>
    </location>
    <ligand>
        <name>Zn(2+)</name>
        <dbReference type="ChEBI" id="CHEBI:29105"/>
    </ligand>
</feature>
<feature type="binding site" evidence="1">
    <location>
        <position position="11"/>
    </location>
    <ligand>
        <name>Zn(2+)</name>
        <dbReference type="ChEBI" id="CHEBI:29105"/>
    </ligand>
</feature>
<feature type="binding site" evidence="1">
    <location>
        <position position="28"/>
    </location>
    <ligand>
        <name>Zn(2+)</name>
        <dbReference type="ChEBI" id="CHEBI:29105"/>
    </ligand>
</feature>
<feature type="binding site" evidence="1">
    <location>
        <position position="32"/>
    </location>
    <ligand>
        <name>Zn(2+)</name>
        <dbReference type="ChEBI" id="CHEBI:29105"/>
    </ligand>
</feature>
<feature type="sequence conflict" description="In Ref. 1; BAA01878." evidence="3" ref="1">
    <original>AA</original>
    <variation>RR</variation>
    <location>
        <begin position="36"/>
        <end position="37"/>
    </location>
</feature>
<feature type="turn" evidence="5">
    <location>
        <begin position="9"/>
        <end position="11"/>
    </location>
</feature>
<feature type="strand" evidence="5">
    <location>
        <begin position="13"/>
        <end position="15"/>
    </location>
</feature>
<feature type="turn" evidence="5">
    <location>
        <begin position="21"/>
        <end position="23"/>
    </location>
</feature>
<feature type="strand" evidence="5">
    <location>
        <begin position="26"/>
        <end position="29"/>
    </location>
</feature>
<feature type="helix" evidence="5">
    <location>
        <begin position="30"/>
        <end position="33"/>
    </location>
</feature>
<feature type="strand" evidence="5">
    <location>
        <begin position="36"/>
        <end position="39"/>
    </location>
</feature>
<feature type="helix" evidence="4">
    <location>
        <begin position="77"/>
        <end position="84"/>
    </location>
</feature>
<feature type="helix" evidence="4">
    <location>
        <begin position="87"/>
        <end position="92"/>
    </location>
</feature>
<feature type="helix" evidence="4">
    <location>
        <begin position="96"/>
        <end position="110"/>
    </location>
</feature>
<feature type="strand" evidence="4">
    <location>
        <begin position="119"/>
        <end position="122"/>
    </location>
</feature>
<feature type="helix" evidence="4">
    <location>
        <begin position="123"/>
        <end position="134"/>
    </location>
</feature>
<feature type="turn" evidence="4">
    <location>
        <begin position="135"/>
        <end position="137"/>
    </location>
</feature>
<feature type="helix" evidence="4">
    <location>
        <begin position="146"/>
        <end position="160"/>
    </location>
</feature>
<sequence length="164" mass="18376">MVSSAVKCGICRGVDGKYKCPKCGVRYCSLKCYKDAAKHVHKESEQPRAGTEANVEVVNNDKIINSSLAMNKTLKTKAFDDIYQNSAELQELLKYNTVKFHLAKVYRILSSTVNDGSSGKMNSDLQKELAVNYLNTLRYGGIHYNEAIEEFCQILLDKLNAVKK</sequence>
<accession>P46973</accession>
<accession>D6VWM6</accession>
<organism>
    <name type="scientific">Saccharomyces cerevisiae (strain ATCC 204508 / S288c)</name>
    <name type="common">Baker's yeast</name>
    <dbReference type="NCBI Taxonomy" id="559292"/>
    <lineage>
        <taxon>Eukaryota</taxon>
        <taxon>Fungi</taxon>
        <taxon>Dikarya</taxon>
        <taxon>Ascomycota</taxon>
        <taxon>Saccharomycotina</taxon>
        <taxon>Saccharomycetes</taxon>
        <taxon>Saccharomycetales</taxon>
        <taxon>Saccharomycetaceae</taxon>
        <taxon>Saccharomyces</taxon>
    </lineage>
</organism>